<gene>
    <name type="primary">lktC</name>
</gene>
<name>LKTC_PASSP</name>
<sequence length="165" mass="19409">MNQHYFNLLGNITWLWMNSPLHREWSCELLARNVIPAIENQQYMLLIDNDVPIAYCSWADLSLETEVKYIKDISSLTPEEWQSGDRRWIIDWVAPFGHSQLLIKNVSEIPDYSRQIYTLLSKTKRTGKIAYFKGGNLDKKTAKKRFDTYQERLGAALKNEFNFTK</sequence>
<proteinExistence type="inferred from homology"/>
<comment type="function">
    <text evidence="1">Involved in fatty acylation of the protoxin (LktA) at two internal lysine residues, thereby converting it to the active toxin.</text>
</comment>
<comment type="catalytic activity">
    <reaction evidence="2">
        <text>a fatty acyl-[ACP] + L-lysyl-[protein] = N(6)-(fatty acyl)-L-lysyl-[protein] + holo-[ACP] + H(+)</text>
        <dbReference type="Rhea" id="RHEA:70667"/>
        <dbReference type="Rhea" id="RHEA-COMP:9685"/>
        <dbReference type="Rhea" id="RHEA-COMP:9752"/>
        <dbReference type="Rhea" id="RHEA-COMP:14125"/>
        <dbReference type="Rhea" id="RHEA-COMP:17946"/>
        <dbReference type="ChEBI" id="CHEBI:15378"/>
        <dbReference type="ChEBI" id="CHEBI:29969"/>
        <dbReference type="ChEBI" id="CHEBI:64479"/>
        <dbReference type="ChEBI" id="CHEBI:138651"/>
        <dbReference type="ChEBI" id="CHEBI:189854"/>
    </reaction>
    <physiologicalReaction direction="left-to-right" evidence="2">
        <dbReference type="Rhea" id="RHEA:70668"/>
    </physiologicalReaction>
</comment>
<comment type="subcellular location">
    <subcellularLocation>
        <location evidence="3">Cytoplasm</location>
    </subcellularLocation>
</comment>
<comment type="similarity">
    <text evidence="3">Belongs to the RTX toxin acyltransferase family.</text>
</comment>
<accession>P55124</accession>
<feature type="chain" id="PRO_0000217882" description="Leukotoxin-activating lysine-acyltransferase LktC">
    <location>
        <begin position="1"/>
        <end position="165"/>
    </location>
</feature>
<feature type="active site" evidence="2">
    <location>
        <position position="22"/>
    </location>
</feature>
<feature type="active site" evidence="2">
    <location>
        <position position="91"/>
    </location>
</feature>
<protein>
    <recommendedName>
        <fullName>Leukotoxin-activating lysine-acyltransferase LktC</fullName>
        <shortName>Leukotoxin C</shortName>
        <shortName>Toxin-activating protein C</shortName>
        <ecNumber evidence="2">2.3.1.-</ecNumber>
    </recommendedName>
</protein>
<organism>
    <name type="scientific">Pasteurella haemolytica-like sp. (strain 5943B)</name>
    <dbReference type="NCBI Taxonomy" id="53500"/>
    <lineage>
        <taxon>Bacteria</taxon>
        <taxon>Pseudomonadati</taxon>
        <taxon>Pseudomonadota</taxon>
        <taxon>Gammaproteobacteria</taxon>
        <taxon>Pasteurellales</taxon>
        <taxon>Pasteurellaceae</taxon>
        <taxon>Mannheimia</taxon>
    </lineage>
</organism>
<reference key="1">
    <citation type="journal article" date="1993" name="Infect. Immun.">
        <title>Molecular characterization of a leukotoxin gene from a Pasteurella haemolytica-like organism, encoding a new member of the RTX toxin family.</title>
        <authorList>
            <person name="Chang Y.-F."/>
            <person name="Ma D.-P."/>
            <person name="Shi J."/>
            <person name="Chengappa M.M."/>
        </authorList>
    </citation>
    <scope>NUCLEOTIDE SEQUENCE [GENOMIC DNA]</scope>
</reference>
<evidence type="ECO:0000250" key="1">
    <source>
        <dbReference type="UniProtKB" id="P16461"/>
    </source>
</evidence>
<evidence type="ECO:0000250" key="2">
    <source>
        <dbReference type="UniProtKB" id="P55132"/>
    </source>
</evidence>
<evidence type="ECO:0000305" key="3"/>
<keyword id="KW-0012">Acyltransferase</keyword>
<keyword id="KW-0204">Cytolysis</keyword>
<keyword id="KW-0963">Cytoplasm</keyword>
<keyword id="KW-0354">Hemolysis</keyword>
<keyword id="KW-0808">Transferase</keyword>
<dbReference type="EC" id="2.3.1.-" evidence="2"/>
<dbReference type="EMBL" id="L12148">
    <property type="protein sequence ID" value="AAA16443.1"/>
    <property type="molecule type" value="Genomic_DNA"/>
</dbReference>
<dbReference type="SMR" id="P55124"/>
<dbReference type="GO" id="GO:0005737">
    <property type="term" value="C:cytoplasm"/>
    <property type="evidence" value="ECO:0007669"/>
    <property type="project" value="UniProtKB-SubCell"/>
</dbReference>
<dbReference type="GO" id="GO:0016746">
    <property type="term" value="F:acyltransferase activity"/>
    <property type="evidence" value="ECO:0007669"/>
    <property type="project" value="UniProtKB-KW"/>
</dbReference>
<dbReference type="GO" id="GO:0031640">
    <property type="term" value="P:killing of cells of another organism"/>
    <property type="evidence" value="ECO:0007669"/>
    <property type="project" value="UniProtKB-KW"/>
</dbReference>
<dbReference type="GO" id="GO:0009404">
    <property type="term" value="P:toxin metabolic process"/>
    <property type="evidence" value="ECO:0007669"/>
    <property type="project" value="InterPro"/>
</dbReference>
<dbReference type="InterPro" id="IPR003996">
    <property type="entry name" value="RTX_toxin-activating_protC_bac"/>
</dbReference>
<dbReference type="Pfam" id="PF02794">
    <property type="entry name" value="HlyC"/>
    <property type="match status" value="1"/>
</dbReference>
<dbReference type="PRINTS" id="PR01489">
    <property type="entry name" value="RTXTOXINC"/>
</dbReference>